<feature type="chain" id="PRO_1000184763" description="ATP synthase subunit delta">
    <location>
        <begin position="1"/>
        <end position="179"/>
    </location>
</feature>
<protein>
    <recommendedName>
        <fullName evidence="1">ATP synthase subunit delta</fullName>
    </recommendedName>
    <alternativeName>
        <fullName evidence="1">ATP synthase F(1) sector subunit delta</fullName>
    </alternativeName>
    <alternativeName>
        <fullName evidence="1">F-type ATPase subunit delta</fullName>
        <shortName evidence="1">F-ATPase subunit delta</shortName>
    </alternativeName>
</protein>
<comment type="function">
    <text evidence="1">F(1)F(0) ATP synthase produces ATP from ADP in the presence of a proton or sodium gradient. F-type ATPases consist of two structural domains, F(1) containing the extramembraneous catalytic core and F(0) containing the membrane proton channel, linked together by a central stalk and a peripheral stalk. During catalysis, ATP synthesis in the catalytic domain of F(1) is coupled via a rotary mechanism of the central stalk subunits to proton translocation.</text>
</comment>
<comment type="function">
    <text evidence="1">This protein is part of the stalk that links CF(0) to CF(1). It either transmits conformational changes from CF(0) to CF(1) or is implicated in proton conduction.</text>
</comment>
<comment type="subunit">
    <text evidence="1">F-type ATPases have 2 components, F(1) - the catalytic core - and F(0) - the membrane proton channel. F(1) has five subunits: alpha(3), beta(3), gamma(1), delta(1), epsilon(1). F(0) has three main subunits: a(1), b(2) and c(10-14). The alpha and beta chains form an alternating ring which encloses part of the gamma chain. F(1) is attached to F(0) by a central stalk formed by the gamma and epsilon chains, while a peripheral stalk is formed by the delta and b chains.</text>
</comment>
<comment type="subcellular location">
    <subcellularLocation>
        <location evidence="1">Cell inner membrane</location>
        <topology evidence="1">Peripheral membrane protein</topology>
    </subcellularLocation>
</comment>
<comment type="similarity">
    <text evidence="1">Belongs to the ATPase delta chain family.</text>
</comment>
<dbReference type="EMBL" id="CP000529">
    <property type="protein sequence ID" value="ABM35577.1"/>
    <property type="molecule type" value="Genomic_DNA"/>
</dbReference>
<dbReference type="RefSeq" id="WP_011799685.1">
    <property type="nucleotide sequence ID" value="NC_008781.1"/>
</dbReference>
<dbReference type="SMR" id="A1VIU9"/>
<dbReference type="STRING" id="365044.Pnap_0252"/>
<dbReference type="KEGG" id="pna:Pnap_0252"/>
<dbReference type="eggNOG" id="COG0712">
    <property type="taxonomic scope" value="Bacteria"/>
</dbReference>
<dbReference type="HOGENOM" id="CLU_085114_3_0_4"/>
<dbReference type="OrthoDB" id="9816221at2"/>
<dbReference type="Proteomes" id="UP000000644">
    <property type="component" value="Chromosome"/>
</dbReference>
<dbReference type="GO" id="GO:0005886">
    <property type="term" value="C:plasma membrane"/>
    <property type="evidence" value="ECO:0007669"/>
    <property type="project" value="UniProtKB-SubCell"/>
</dbReference>
<dbReference type="GO" id="GO:0045259">
    <property type="term" value="C:proton-transporting ATP synthase complex"/>
    <property type="evidence" value="ECO:0007669"/>
    <property type="project" value="UniProtKB-KW"/>
</dbReference>
<dbReference type="GO" id="GO:0046933">
    <property type="term" value="F:proton-transporting ATP synthase activity, rotational mechanism"/>
    <property type="evidence" value="ECO:0007669"/>
    <property type="project" value="UniProtKB-UniRule"/>
</dbReference>
<dbReference type="Gene3D" id="1.10.520.20">
    <property type="entry name" value="N-terminal domain of the delta subunit of the F1F0-ATP synthase"/>
    <property type="match status" value="1"/>
</dbReference>
<dbReference type="HAMAP" id="MF_01416">
    <property type="entry name" value="ATP_synth_delta_bact"/>
    <property type="match status" value="1"/>
</dbReference>
<dbReference type="InterPro" id="IPR026015">
    <property type="entry name" value="ATP_synth_OSCP/delta_N_sf"/>
</dbReference>
<dbReference type="InterPro" id="IPR000711">
    <property type="entry name" value="ATPase_OSCP/dsu"/>
</dbReference>
<dbReference type="NCBIfam" id="TIGR01145">
    <property type="entry name" value="ATP_synt_delta"/>
    <property type="match status" value="1"/>
</dbReference>
<dbReference type="NCBIfam" id="NF004402">
    <property type="entry name" value="PRK05758.2-2"/>
    <property type="match status" value="1"/>
</dbReference>
<dbReference type="PANTHER" id="PTHR11910">
    <property type="entry name" value="ATP SYNTHASE DELTA CHAIN"/>
    <property type="match status" value="1"/>
</dbReference>
<dbReference type="Pfam" id="PF00213">
    <property type="entry name" value="OSCP"/>
    <property type="match status" value="1"/>
</dbReference>
<dbReference type="PRINTS" id="PR00125">
    <property type="entry name" value="ATPASEDELTA"/>
</dbReference>
<dbReference type="SUPFAM" id="SSF47928">
    <property type="entry name" value="N-terminal domain of the delta subunit of the F1F0-ATP synthase"/>
    <property type="match status" value="1"/>
</dbReference>
<proteinExistence type="inferred from homology"/>
<reference key="1">
    <citation type="journal article" date="2009" name="Environ. Microbiol.">
        <title>The genome of Polaromonas naphthalenivorans strain CJ2, isolated from coal tar-contaminated sediment, reveals physiological and metabolic versatility and evolution through extensive horizontal gene transfer.</title>
        <authorList>
            <person name="Yagi J.M."/>
            <person name="Sims D."/>
            <person name="Brettin T."/>
            <person name="Bruce D."/>
            <person name="Madsen E.L."/>
        </authorList>
    </citation>
    <scope>NUCLEOTIDE SEQUENCE [LARGE SCALE GENOMIC DNA]</scope>
    <source>
        <strain>CJ2</strain>
    </source>
</reference>
<name>ATPD_POLNA</name>
<organism>
    <name type="scientific">Polaromonas naphthalenivorans (strain CJ2)</name>
    <dbReference type="NCBI Taxonomy" id="365044"/>
    <lineage>
        <taxon>Bacteria</taxon>
        <taxon>Pseudomonadati</taxon>
        <taxon>Pseudomonadota</taxon>
        <taxon>Betaproteobacteria</taxon>
        <taxon>Burkholderiales</taxon>
        <taxon>Comamonadaceae</taxon>
        <taxon>Polaromonas</taxon>
    </lineage>
</organism>
<gene>
    <name evidence="1" type="primary">atpH</name>
    <name type="ordered locus">Pnap_0252</name>
</gene>
<sequence>MAELATIARPYADALYKAQGSDLATTALWVDKLAAVAGNAQLLQFADSPKVSVDQVFDVVAGVASNANDPLPEAARNFLRLVIENGRLSALPEIASQFRSLKNAAGGMTDAVVFSAFPMDEQALNDIAAVLEKRFGRKLGIKVELDPSLIGGIRAVVGDEVLDTSVKARLEQMKMALIA</sequence>
<accession>A1VIU9</accession>
<evidence type="ECO:0000255" key="1">
    <source>
        <dbReference type="HAMAP-Rule" id="MF_01416"/>
    </source>
</evidence>
<keyword id="KW-0066">ATP synthesis</keyword>
<keyword id="KW-0997">Cell inner membrane</keyword>
<keyword id="KW-1003">Cell membrane</keyword>
<keyword id="KW-0139">CF(1)</keyword>
<keyword id="KW-0375">Hydrogen ion transport</keyword>
<keyword id="KW-0406">Ion transport</keyword>
<keyword id="KW-0472">Membrane</keyword>
<keyword id="KW-1185">Reference proteome</keyword>
<keyword id="KW-0813">Transport</keyword>